<sequence length="190" mass="20063">MIGRITGTLIEKSPPVVCVDVNGVGYEIDVPMSTLYALPETGARVTLFTHLVVREDAQLLYGFGSSAERSTFRELIKVTGIGARTALAVLSGLSVAELSQAITLQETGRLTRVPGIGKKTAERLLLEMRGKLGADIGATPHAASGHQSDILNALLALGYSDKESQAALKKLPDGVDVSEGIRLALKALVR</sequence>
<dbReference type="EMBL" id="BX640421">
    <property type="protein sequence ID" value="CAE43681.1"/>
    <property type="molecule type" value="Genomic_DNA"/>
</dbReference>
<dbReference type="RefSeq" id="NP_881945.1">
    <property type="nucleotide sequence ID" value="NC_002929.2"/>
</dbReference>
<dbReference type="RefSeq" id="WP_003814226.1">
    <property type="nucleotide sequence ID" value="NZ_CP039022.1"/>
</dbReference>
<dbReference type="SMR" id="Q7VTT9"/>
<dbReference type="STRING" id="257313.BP3418"/>
<dbReference type="PaxDb" id="257313-BP3418"/>
<dbReference type="GeneID" id="69600592"/>
<dbReference type="KEGG" id="bpe:BP3418"/>
<dbReference type="PATRIC" id="fig|257313.5.peg.3702"/>
<dbReference type="eggNOG" id="COG0632">
    <property type="taxonomic scope" value="Bacteria"/>
</dbReference>
<dbReference type="HOGENOM" id="CLU_087936_0_0_4"/>
<dbReference type="Proteomes" id="UP000002676">
    <property type="component" value="Chromosome"/>
</dbReference>
<dbReference type="GO" id="GO:0005737">
    <property type="term" value="C:cytoplasm"/>
    <property type="evidence" value="ECO:0007669"/>
    <property type="project" value="UniProtKB-SubCell"/>
</dbReference>
<dbReference type="GO" id="GO:0009379">
    <property type="term" value="C:Holliday junction helicase complex"/>
    <property type="evidence" value="ECO:0007669"/>
    <property type="project" value="InterPro"/>
</dbReference>
<dbReference type="GO" id="GO:0048476">
    <property type="term" value="C:Holliday junction resolvase complex"/>
    <property type="evidence" value="ECO:0007669"/>
    <property type="project" value="UniProtKB-UniRule"/>
</dbReference>
<dbReference type="GO" id="GO:0005524">
    <property type="term" value="F:ATP binding"/>
    <property type="evidence" value="ECO:0007669"/>
    <property type="project" value="InterPro"/>
</dbReference>
<dbReference type="GO" id="GO:0000400">
    <property type="term" value="F:four-way junction DNA binding"/>
    <property type="evidence" value="ECO:0007669"/>
    <property type="project" value="UniProtKB-UniRule"/>
</dbReference>
<dbReference type="GO" id="GO:0009378">
    <property type="term" value="F:four-way junction helicase activity"/>
    <property type="evidence" value="ECO:0007669"/>
    <property type="project" value="InterPro"/>
</dbReference>
<dbReference type="GO" id="GO:0006310">
    <property type="term" value="P:DNA recombination"/>
    <property type="evidence" value="ECO:0007669"/>
    <property type="project" value="UniProtKB-UniRule"/>
</dbReference>
<dbReference type="GO" id="GO:0006281">
    <property type="term" value="P:DNA repair"/>
    <property type="evidence" value="ECO:0007669"/>
    <property type="project" value="UniProtKB-UniRule"/>
</dbReference>
<dbReference type="CDD" id="cd14332">
    <property type="entry name" value="UBA_RuvA_C"/>
    <property type="match status" value="1"/>
</dbReference>
<dbReference type="Gene3D" id="1.10.150.20">
    <property type="entry name" value="5' to 3' exonuclease, C-terminal subdomain"/>
    <property type="match status" value="1"/>
</dbReference>
<dbReference type="Gene3D" id="1.10.8.10">
    <property type="entry name" value="DNA helicase RuvA subunit, C-terminal domain"/>
    <property type="match status" value="1"/>
</dbReference>
<dbReference type="Gene3D" id="2.40.50.140">
    <property type="entry name" value="Nucleic acid-binding proteins"/>
    <property type="match status" value="1"/>
</dbReference>
<dbReference type="HAMAP" id="MF_00031">
    <property type="entry name" value="DNA_HJ_migration_RuvA"/>
    <property type="match status" value="1"/>
</dbReference>
<dbReference type="InterPro" id="IPR013849">
    <property type="entry name" value="DNA_helicase_Holl-junc_RuvA_I"/>
</dbReference>
<dbReference type="InterPro" id="IPR003583">
    <property type="entry name" value="Hlx-hairpin-Hlx_DNA-bd_motif"/>
</dbReference>
<dbReference type="InterPro" id="IPR012340">
    <property type="entry name" value="NA-bd_OB-fold"/>
</dbReference>
<dbReference type="InterPro" id="IPR000085">
    <property type="entry name" value="RuvA"/>
</dbReference>
<dbReference type="InterPro" id="IPR010994">
    <property type="entry name" value="RuvA_2-like"/>
</dbReference>
<dbReference type="InterPro" id="IPR011114">
    <property type="entry name" value="RuvA_C"/>
</dbReference>
<dbReference type="InterPro" id="IPR036267">
    <property type="entry name" value="RuvA_C_sf"/>
</dbReference>
<dbReference type="NCBIfam" id="TIGR00084">
    <property type="entry name" value="ruvA"/>
    <property type="match status" value="1"/>
</dbReference>
<dbReference type="Pfam" id="PF14520">
    <property type="entry name" value="HHH_5"/>
    <property type="match status" value="1"/>
</dbReference>
<dbReference type="Pfam" id="PF07499">
    <property type="entry name" value="RuvA_C"/>
    <property type="match status" value="1"/>
</dbReference>
<dbReference type="Pfam" id="PF01330">
    <property type="entry name" value="RuvA_N"/>
    <property type="match status" value="1"/>
</dbReference>
<dbReference type="SMART" id="SM00278">
    <property type="entry name" value="HhH1"/>
    <property type="match status" value="2"/>
</dbReference>
<dbReference type="SUPFAM" id="SSF46929">
    <property type="entry name" value="DNA helicase RuvA subunit, C-terminal domain"/>
    <property type="match status" value="1"/>
</dbReference>
<dbReference type="SUPFAM" id="SSF50249">
    <property type="entry name" value="Nucleic acid-binding proteins"/>
    <property type="match status" value="1"/>
</dbReference>
<dbReference type="SUPFAM" id="SSF47781">
    <property type="entry name" value="RuvA domain 2-like"/>
    <property type="match status" value="1"/>
</dbReference>
<keyword id="KW-0963">Cytoplasm</keyword>
<keyword id="KW-0227">DNA damage</keyword>
<keyword id="KW-0233">DNA recombination</keyword>
<keyword id="KW-0234">DNA repair</keyword>
<keyword id="KW-0238">DNA-binding</keyword>
<keyword id="KW-1185">Reference proteome</keyword>
<name>RUVA_BORPE</name>
<reference key="1">
    <citation type="journal article" date="2003" name="Nat. Genet.">
        <title>Comparative analysis of the genome sequences of Bordetella pertussis, Bordetella parapertussis and Bordetella bronchiseptica.</title>
        <authorList>
            <person name="Parkhill J."/>
            <person name="Sebaihia M."/>
            <person name="Preston A."/>
            <person name="Murphy L.D."/>
            <person name="Thomson N.R."/>
            <person name="Harris D.E."/>
            <person name="Holden M.T.G."/>
            <person name="Churcher C.M."/>
            <person name="Bentley S.D."/>
            <person name="Mungall K.L."/>
            <person name="Cerdeno-Tarraga A.-M."/>
            <person name="Temple L."/>
            <person name="James K.D."/>
            <person name="Harris B."/>
            <person name="Quail M.A."/>
            <person name="Achtman M."/>
            <person name="Atkin R."/>
            <person name="Baker S."/>
            <person name="Basham D."/>
            <person name="Bason N."/>
            <person name="Cherevach I."/>
            <person name="Chillingworth T."/>
            <person name="Collins M."/>
            <person name="Cronin A."/>
            <person name="Davis P."/>
            <person name="Doggett J."/>
            <person name="Feltwell T."/>
            <person name="Goble A."/>
            <person name="Hamlin N."/>
            <person name="Hauser H."/>
            <person name="Holroyd S."/>
            <person name="Jagels K."/>
            <person name="Leather S."/>
            <person name="Moule S."/>
            <person name="Norberczak H."/>
            <person name="O'Neil S."/>
            <person name="Ormond D."/>
            <person name="Price C."/>
            <person name="Rabbinowitsch E."/>
            <person name="Rutter S."/>
            <person name="Sanders M."/>
            <person name="Saunders D."/>
            <person name="Seeger K."/>
            <person name="Sharp S."/>
            <person name="Simmonds M."/>
            <person name="Skelton J."/>
            <person name="Squares R."/>
            <person name="Squares S."/>
            <person name="Stevens K."/>
            <person name="Unwin L."/>
            <person name="Whitehead S."/>
            <person name="Barrell B.G."/>
            <person name="Maskell D.J."/>
        </authorList>
    </citation>
    <scope>NUCLEOTIDE SEQUENCE [LARGE SCALE GENOMIC DNA]</scope>
    <source>
        <strain>Tohama I / ATCC BAA-589 / NCTC 13251</strain>
    </source>
</reference>
<gene>
    <name evidence="1" type="primary">ruvA</name>
    <name type="ordered locus">BP3418</name>
</gene>
<evidence type="ECO:0000255" key="1">
    <source>
        <dbReference type="HAMAP-Rule" id="MF_00031"/>
    </source>
</evidence>
<comment type="function">
    <text evidence="1">The RuvA-RuvB-RuvC complex processes Holliday junction (HJ) DNA during genetic recombination and DNA repair, while the RuvA-RuvB complex plays an important role in the rescue of blocked DNA replication forks via replication fork reversal (RFR). RuvA specifically binds to HJ cruciform DNA, conferring on it an open structure. The RuvB hexamer acts as an ATP-dependent pump, pulling dsDNA into and through the RuvAB complex. HJ branch migration allows RuvC to scan DNA until it finds its consensus sequence, where it cleaves and resolves the cruciform DNA.</text>
</comment>
<comment type="subunit">
    <text evidence="1">Homotetramer. Forms an RuvA(8)-RuvB(12)-Holliday junction (HJ) complex. HJ DNA is sandwiched between 2 RuvA tetramers; dsDNA enters through RuvA and exits via RuvB. An RuvB hexamer assembles on each DNA strand where it exits the tetramer. Each RuvB hexamer is contacted by two RuvA subunits (via domain III) on 2 adjacent RuvB subunits; this complex drives branch migration. In the full resolvosome a probable DNA-RuvA(4)-RuvB(12)-RuvC(2) complex forms which resolves the HJ.</text>
</comment>
<comment type="subcellular location">
    <subcellularLocation>
        <location evidence="1">Cytoplasm</location>
    </subcellularLocation>
</comment>
<comment type="domain">
    <text evidence="1">Has three domains with a flexible linker between the domains II and III and assumes an 'L' shape. Domain III is highly mobile and contacts RuvB.</text>
</comment>
<comment type="similarity">
    <text evidence="1">Belongs to the RuvA family.</text>
</comment>
<protein>
    <recommendedName>
        <fullName evidence="1">Holliday junction branch migration complex subunit RuvA</fullName>
    </recommendedName>
</protein>
<proteinExistence type="inferred from homology"/>
<accession>Q7VTT9</accession>
<organism>
    <name type="scientific">Bordetella pertussis (strain Tohama I / ATCC BAA-589 / NCTC 13251)</name>
    <dbReference type="NCBI Taxonomy" id="257313"/>
    <lineage>
        <taxon>Bacteria</taxon>
        <taxon>Pseudomonadati</taxon>
        <taxon>Pseudomonadota</taxon>
        <taxon>Betaproteobacteria</taxon>
        <taxon>Burkholderiales</taxon>
        <taxon>Alcaligenaceae</taxon>
        <taxon>Bordetella</taxon>
    </lineage>
</organism>
<feature type="chain" id="PRO_0000094608" description="Holliday junction branch migration complex subunit RuvA">
    <location>
        <begin position="1"/>
        <end position="190"/>
    </location>
</feature>
<feature type="region of interest" description="Domain I" evidence="1">
    <location>
        <begin position="1"/>
        <end position="64"/>
    </location>
</feature>
<feature type="region of interest" description="Domain II" evidence="1">
    <location>
        <begin position="65"/>
        <end position="137"/>
    </location>
</feature>
<feature type="region of interest" description="Flexible linker" evidence="1">
    <location>
        <begin position="137"/>
        <end position="141"/>
    </location>
</feature>
<feature type="region of interest" description="Domain III" evidence="1">
    <location>
        <begin position="142"/>
        <end position="190"/>
    </location>
</feature>